<organism>
    <name type="scientific">Escherichia coli (strain K12)</name>
    <dbReference type="NCBI Taxonomy" id="83333"/>
    <lineage>
        <taxon>Bacteria</taxon>
        <taxon>Pseudomonadati</taxon>
        <taxon>Pseudomonadota</taxon>
        <taxon>Gammaproteobacteria</taxon>
        <taxon>Enterobacterales</taxon>
        <taxon>Enterobacteriaceae</taxon>
        <taxon>Escherichia</taxon>
    </lineage>
</organism>
<reference key="1">
    <citation type="journal article" date="1996" name="DNA Res.">
        <title>A 718-kb DNA sequence of the Escherichia coli K-12 genome corresponding to the 12.7-28.0 min region on the linkage map.</title>
        <authorList>
            <person name="Oshima T."/>
            <person name="Aiba H."/>
            <person name="Baba T."/>
            <person name="Fujita K."/>
            <person name="Hayashi K."/>
            <person name="Honjo A."/>
            <person name="Ikemoto K."/>
            <person name="Inada T."/>
            <person name="Itoh T."/>
            <person name="Kajihara M."/>
            <person name="Kanai K."/>
            <person name="Kashimoto K."/>
            <person name="Kimura S."/>
            <person name="Kitagawa M."/>
            <person name="Makino K."/>
            <person name="Masuda S."/>
            <person name="Miki T."/>
            <person name="Mizobuchi K."/>
            <person name="Mori H."/>
            <person name="Motomura K."/>
            <person name="Nakamura Y."/>
            <person name="Nashimoto H."/>
            <person name="Nishio Y."/>
            <person name="Saito N."/>
            <person name="Sampei G."/>
            <person name="Seki Y."/>
            <person name="Tagami H."/>
            <person name="Takemoto K."/>
            <person name="Wada C."/>
            <person name="Yamamoto Y."/>
            <person name="Yano M."/>
            <person name="Horiuchi T."/>
        </authorList>
    </citation>
    <scope>NUCLEOTIDE SEQUENCE [LARGE SCALE GENOMIC DNA]</scope>
    <source>
        <strain>K12 / W3110 / ATCC 27325 / DSM 5911</strain>
    </source>
</reference>
<reference key="2">
    <citation type="journal article" date="1997" name="Science">
        <title>The complete genome sequence of Escherichia coli K-12.</title>
        <authorList>
            <person name="Blattner F.R."/>
            <person name="Plunkett G. III"/>
            <person name="Bloch C.A."/>
            <person name="Perna N.T."/>
            <person name="Burland V."/>
            <person name="Riley M."/>
            <person name="Collado-Vides J."/>
            <person name="Glasner J.D."/>
            <person name="Rode C.K."/>
            <person name="Mayhew G.F."/>
            <person name="Gregor J."/>
            <person name="Davis N.W."/>
            <person name="Kirkpatrick H.A."/>
            <person name="Goeden M.A."/>
            <person name="Rose D.J."/>
            <person name="Mau B."/>
            <person name="Shao Y."/>
        </authorList>
    </citation>
    <scope>NUCLEOTIDE SEQUENCE [LARGE SCALE GENOMIC DNA]</scope>
    <source>
        <strain>K12 / MG1655 / ATCC 47076</strain>
    </source>
</reference>
<reference key="3">
    <citation type="journal article" date="2006" name="Mol. Syst. Biol.">
        <title>Highly accurate genome sequences of Escherichia coli K-12 strains MG1655 and W3110.</title>
        <authorList>
            <person name="Hayashi K."/>
            <person name="Morooka N."/>
            <person name="Yamamoto Y."/>
            <person name="Fujita K."/>
            <person name="Isono K."/>
            <person name="Choi S."/>
            <person name="Ohtsubo E."/>
            <person name="Baba T."/>
            <person name="Wanner B.L."/>
            <person name="Mori H."/>
            <person name="Horiuchi T."/>
        </authorList>
    </citation>
    <scope>NUCLEOTIDE SEQUENCE [LARGE SCALE GENOMIC DNA]</scope>
    <source>
        <strain>K12 / W3110 / ATCC 27325 / DSM 5911</strain>
    </source>
</reference>
<reference key="4">
    <citation type="journal article" date="1993" name="J. Bacteriol.">
        <title>Molecular analysis of the phoH gene, belonging to the phosphate regulon in Escherichia coli.</title>
        <authorList>
            <person name="Kim S.-K."/>
            <person name="Makino K."/>
            <person name="Amemura M."/>
            <person name="Shinagawa H."/>
            <person name="Nakata A."/>
        </authorList>
    </citation>
    <scope>NUCLEOTIDE SEQUENCE [GENOMIC DNA] OF 196-423</scope>
    <source>
        <strain>K12</strain>
    </source>
</reference>
<reference key="5">
    <citation type="journal article" date="2003" name="J. Biol. Chem.">
        <title>Global iron-dependent gene regulation in Escherichia coli. A new mechanism for iron homeostasis.</title>
        <authorList>
            <person name="McHugh J.P."/>
            <person name="Rodriguez-Quinones F."/>
            <person name="Abdul-Tehrani H."/>
            <person name="Svistunenko D.A."/>
            <person name="Poole R.K."/>
            <person name="Cooper C.E."/>
            <person name="Andrews S.C."/>
        </authorList>
    </citation>
    <scope>INDUCTION</scope>
    <source>
        <strain>K12 / MC4100 / ATCC 35695 / DSM 6574</strain>
    </source>
</reference>
<reference key="6">
    <citation type="journal article" date="2006" name="J. Biol. Chem.">
        <title>YcdB from Escherichia coli reveals a novel class of Tat-dependently translocated hemoproteins.</title>
        <authorList>
            <person name="Sturm A."/>
            <person name="Schierhorn A."/>
            <person name="Lindenstrauss U."/>
            <person name="Lilie H."/>
            <person name="Brueser T."/>
        </authorList>
    </citation>
    <scope>FUNCTION AS A PEROXIDASE</scope>
    <scope>SUBUNIT</scope>
    <scope>EXPORT VIA THE TAT-SYSTEM</scope>
    <scope>SUBCELLULAR LOCATION</scope>
    <scope>COFACTOR</scope>
    <scope>MASS SPECTROMETRY</scope>
    <source>
        <strain>K12 / MC4100 / ATCC 35695 / DSM 6574</strain>
    </source>
</reference>
<reference key="7">
    <citation type="journal article" date="2007" name="J. Biol. Chem.">
        <title>Export pathway selectivity of Escherichia coli twin arginine translocation signal peptides.</title>
        <authorList>
            <person name="Tullman-Ercek D."/>
            <person name="DeLisa M.P."/>
            <person name="Kawarasaki Y."/>
            <person name="Iranpour P."/>
            <person name="Ribnicky B."/>
            <person name="Palmer T."/>
            <person name="Georgiou G."/>
        </authorList>
    </citation>
    <scope>EXPORT VIA THE TAT-SYSTEM AND THE SEC-SYSTEM</scope>
</reference>
<reference key="8">
    <citation type="journal article" date="2007" name="Mol. Microbiol.">
        <title>EfeUOB (YcdNOB) is a tripartite, acid-induced and CpxAR-regulated, low-pH Fe2+ transporter that is cryptic in Escherichia coli K-12 but functional in E. coli O157:H7.</title>
        <authorList>
            <person name="Cao J."/>
            <person name="Woodhall M.R."/>
            <person name="Alvarez J."/>
            <person name="Cartron M.L."/>
            <person name="Andrews S.C."/>
        </authorList>
    </citation>
    <scope>INDUCTION</scope>
    <scope>SUBUNIT</scope>
    <scope>LACK OF ACTIVITY IN STRAIN K12</scope>
    <source>
        <strain>K12</strain>
    </source>
</reference>
<reference key="9">
    <citation type="journal article" date="2009" name="Proc. Natl. Acad. Sci. U.S.A.">
        <title>Bacteria capture iron from heme by keeping tetrapyrrol skeleton intact.</title>
        <authorList>
            <person name="Letoffe S."/>
            <person name="Heuck G."/>
            <person name="Delepelaire P."/>
            <person name="Lange N."/>
            <person name="Wandersman C."/>
        </authorList>
    </citation>
    <scope>FUNCTION AS A DEFERROCHELATASE</scope>
    <scope>CATALYTIC ACTIVITY</scope>
    <source>
        <strain>K12 / MG1655 / ATCC 47076</strain>
    </source>
</reference>
<reference key="10">
    <citation type="journal article" date="2007" name="Acta Crystallogr. F">
        <title>Preliminary X-ray diffraction analysis of YcdB from Escherichia coli: a novel haem-containing and Tat-secreted periplasmic protein with a potential role in iron transport.</title>
        <authorList>
            <person name="Cartron M.L."/>
            <person name="Mitchell S.A."/>
            <person name="Woodhall M.R."/>
            <person name="Andrews S.C."/>
            <person name="Watson K.A."/>
        </authorList>
    </citation>
    <scope>CRYSTALLIZATION</scope>
    <source>
        <strain>K12</strain>
    </source>
</reference>
<reference evidence="9 10 11" key="11">
    <citation type="submission" date="2011-01" db="PDB data bank">
        <title>EfeB, the peroxidase component of the EfeUOB bacterial Fe(II) transport system, also shows novel removal of iron from heme.</title>
        <authorList>
            <person name="Bamford V.A."/>
            <person name="Andrews S.C."/>
            <person name="Watson K.A."/>
        </authorList>
    </citation>
    <scope>X-RAY CRYSTALLOGRAPHY (2.0 ANGSTROMS) OF 36-423 OF APOPROTEIN AND IN COMPLEXES WITH PROTOPORPHYRIN IX AND HEME</scope>
    <scope>SUBUNIT</scope>
    <source>
        <strain>K12</strain>
    </source>
</reference>
<keyword id="KW-0002">3D-structure</keyword>
<keyword id="KW-0349">Heme</keyword>
<keyword id="KW-0408">Iron</keyword>
<keyword id="KW-0456">Lyase</keyword>
<keyword id="KW-0479">Metal-binding</keyword>
<keyword id="KW-0560">Oxidoreductase</keyword>
<keyword id="KW-0574">Periplasm</keyword>
<keyword id="KW-0575">Peroxidase</keyword>
<keyword id="KW-1185">Reference proteome</keyword>
<keyword id="KW-0732">Signal</keyword>
<proteinExistence type="evidence at protein level"/>
<protein>
    <recommendedName>
        <fullName evidence="8">Deferrochelatase</fullName>
        <ecNumber evidence="4">4.98.1.1</ecNumber>
    </recommendedName>
    <alternativeName>
        <fullName evidence="7">Peroxidase EfeB</fullName>
        <ecNumber evidence="2">1.11.1.-</ecNumber>
    </alternativeName>
</protein>
<dbReference type="EC" id="4.98.1.1" evidence="4"/>
<dbReference type="EC" id="1.11.1.-" evidence="2"/>
<dbReference type="EMBL" id="U00096">
    <property type="protein sequence ID" value="AAC74104.1"/>
    <property type="molecule type" value="Genomic_DNA"/>
</dbReference>
<dbReference type="EMBL" id="AP009048">
    <property type="protein sequence ID" value="BAA35800.1"/>
    <property type="molecule type" value="Genomic_DNA"/>
</dbReference>
<dbReference type="EMBL" id="D10391">
    <property type="protein sequence ID" value="BAA01229.1"/>
    <property type="molecule type" value="Genomic_DNA"/>
</dbReference>
<dbReference type="PIR" id="A64844">
    <property type="entry name" value="A64844"/>
</dbReference>
<dbReference type="RefSeq" id="NP_415538.1">
    <property type="nucleotide sequence ID" value="NC_000913.3"/>
</dbReference>
<dbReference type="RefSeq" id="WP_001199471.1">
    <property type="nucleotide sequence ID" value="NZ_SSZK01000002.1"/>
</dbReference>
<dbReference type="PDB" id="2Y4D">
    <property type="method" value="X-ray"/>
    <property type="resolution" value="2.00 A"/>
    <property type="chains" value="A/B=36-423"/>
</dbReference>
<dbReference type="PDB" id="2Y4E">
    <property type="method" value="X-ray"/>
    <property type="resolution" value="2.30 A"/>
    <property type="chains" value="A/B=36-423"/>
</dbReference>
<dbReference type="PDB" id="2Y4F">
    <property type="method" value="X-ray"/>
    <property type="resolution" value="2.70 A"/>
    <property type="chains" value="A/B=36-423"/>
</dbReference>
<dbReference type="PDBsum" id="2Y4D"/>
<dbReference type="PDBsum" id="2Y4E"/>
<dbReference type="PDBsum" id="2Y4F"/>
<dbReference type="SMR" id="P31545"/>
<dbReference type="BioGRID" id="4263253">
    <property type="interactions" value="34"/>
</dbReference>
<dbReference type="FunCoup" id="P31545">
    <property type="interactions" value="53"/>
</dbReference>
<dbReference type="IntAct" id="P31545">
    <property type="interactions" value="8"/>
</dbReference>
<dbReference type="STRING" id="511145.b1019"/>
<dbReference type="PeroxiBase" id="5870">
    <property type="entry name" value="EcoDyPrx01_K12"/>
</dbReference>
<dbReference type="TCDB" id="2.A.108.2.3">
    <property type="family name" value="the iron/lead transporter (ilt) family"/>
</dbReference>
<dbReference type="PaxDb" id="511145-b1019"/>
<dbReference type="EnsemblBacteria" id="AAC74104">
    <property type="protein sequence ID" value="AAC74104"/>
    <property type="gene ID" value="b1019"/>
</dbReference>
<dbReference type="GeneID" id="946500"/>
<dbReference type="KEGG" id="ecj:JW1004"/>
<dbReference type="KEGG" id="eco:b1019"/>
<dbReference type="KEGG" id="ecoc:C3026_06195"/>
<dbReference type="PATRIC" id="fig|1411691.4.peg.1250"/>
<dbReference type="EchoBASE" id="EB1686"/>
<dbReference type="eggNOG" id="COG2837">
    <property type="taxonomic scope" value="Bacteria"/>
</dbReference>
<dbReference type="HOGENOM" id="CLU_039488_0_0_6"/>
<dbReference type="InParanoid" id="P31545"/>
<dbReference type="OMA" id="QACANDP"/>
<dbReference type="OrthoDB" id="9781066at2"/>
<dbReference type="PhylomeDB" id="P31545"/>
<dbReference type="BioCyc" id="EcoCyc:EG11735-MONOMER"/>
<dbReference type="BioCyc" id="MetaCyc:EG11735-MONOMER"/>
<dbReference type="EvolutionaryTrace" id="P31545"/>
<dbReference type="PHI-base" id="PHI:10992"/>
<dbReference type="PRO" id="PR:P31545"/>
<dbReference type="Proteomes" id="UP000000625">
    <property type="component" value="Chromosome"/>
</dbReference>
<dbReference type="GO" id="GO:0005829">
    <property type="term" value="C:cytosol"/>
    <property type="evidence" value="ECO:0000269"/>
    <property type="project" value="EcoCyc"/>
</dbReference>
<dbReference type="GO" id="GO:0030288">
    <property type="term" value="C:outer membrane-bounded periplasmic space"/>
    <property type="evidence" value="ECO:0000314"/>
    <property type="project" value="EcoCyc"/>
</dbReference>
<dbReference type="GO" id="GO:0042597">
    <property type="term" value="C:periplasmic space"/>
    <property type="evidence" value="ECO:0000314"/>
    <property type="project" value="EcoliWiki"/>
</dbReference>
<dbReference type="GO" id="GO:0004325">
    <property type="term" value="F:ferrochelatase activity"/>
    <property type="evidence" value="ECO:0007669"/>
    <property type="project" value="RHEA"/>
</dbReference>
<dbReference type="GO" id="GO:0020037">
    <property type="term" value="F:heme binding"/>
    <property type="evidence" value="ECO:0000314"/>
    <property type="project" value="EcoliWiki"/>
</dbReference>
<dbReference type="GO" id="GO:0046872">
    <property type="term" value="F:metal ion binding"/>
    <property type="evidence" value="ECO:0007669"/>
    <property type="project" value="UniProtKB-KW"/>
</dbReference>
<dbReference type="GO" id="GO:0004601">
    <property type="term" value="F:peroxidase activity"/>
    <property type="evidence" value="ECO:0000314"/>
    <property type="project" value="EcoliWiki"/>
</dbReference>
<dbReference type="GO" id="GO:0006974">
    <property type="term" value="P:DNA damage response"/>
    <property type="evidence" value="ECO:0000270"/>
    <property type="project" value="EcoliWiki"/>
</dbReference>
<dbReference type="GO" id="GO:0033212">
    <property type="term" value="P:iron import into cell"/>
    <property type="evidence" value="ECO:0000269"/>
    <property type="project" value="EcoCyc"/>
</dbReference>
<dbReference type="InterPro" id="IPR011008">
    <property type="entry name" value="Dimeric_a/b-barrel"/>
</dbReference>
<dbReference type="InterPro" id="IPR048328">
    <property type="entry name" value="Dyp_perox_C"/>
</dbReference>
<dbReference type="InterPro" id="IPR048327">
    <property type="entry name" value="Dyp_perox_N"/>
</dbReference>
<dbReference type="InterPro" id="IPR006314">
    <property type="entry name" value="Dyp_peroxidase"/>
</dbReference>
<dbReference type="InterPro" id="IPR006313">
    <property type="entry name" value="EfeB/EfeN"/>
</dbReference>
<dbReference type="InterPro" id="IPR006311">
    <property type="entry name" value="TAT_signal"/>
</dbReference>
<dbReference type="NCBIfam" id="TIGR01413">
    <property type="entry name" value="Dyp_perox_fam"/>
    <property type="match status" value="1"/>
</dbReference>
<dbReference type="NCBIfam" id="TIGR01412">
    <property type="entry name" value="tat_substr_1"/>
    <property type="match status" value="1"/>
</dbReference>
<dbReference type="PANTHER" id="PTHR30521:SF4">
    <property type="entry name" value="DEFERROCHELATASE"/>
    <property type="match status" value="1"/>
</dbReference>
<dbReference type="PANTHER" id="PTHR30521">
    <property type="entry name" value="DEFERROCHELATASE/PEROXIDASE"/>
    <property type="match status" value="1"/>
</dbReference>
<dbReference type="Pfam" id="PF20628">
    <property type="entry name" value="Dyp_perox_C"/>
    <property type="match status" value="1"/>
</dbReference>
<dbReference type="Pfam" id="PF04261">
    <property type="entry name" value="Dyp_perox_N"/>
    <property type="match status" value="1"/>
</dbReference>
<dbReference type="SUPFAM" id="SSF54909">
    <property type="entry name" value="Dimeric alpha+beta barrel"/>
    <property type="match status" value="1"/>
</dbReference>
<dbReference type="PROSITE" id="PS51404">
    <property type="entry name" value="DYP_PEROXIDASE"/>
    <property type="match status" value="1"/>
</dbReference>
<dbReference type="PROSITE" id="PS51318">
    <property type="entry name" value="TAT"/>
    <property type="match status" value="1"/>
</dbReference>
<comment type="function">
    <text evidence="2 4">Involved in the recovery of exogenous heme iron. Extracts iron from heme while preserving the protoporphyrin ring intact. Also displays peroxidase activity on guaiacol in vitro.</text>
</comment>
<comment type="catalytic activity">
    <reaction evidence="4">
        <text>heme b + 2 H(+) = protoporphyrin IX + Fe(2+)</text>
        <dbReference type="Rhea" id="RHEA:22584"/>
        <dbReference type="ChEBI" id="CHEBI:15378"/>
        <dbReference type="ChEBI" id="CHEBI:29033"/>
        <dbReference type="ChEBI" id="CHEBI:57306"/>
        <dbReference type="ChEBI" id="CHEBI:60344"/>
        <dbReference type="EC" id="4.98.1.1"/>
    </reaction>
    <physiologicalReaction direction="left-to-right" evidence="4">
        <dbReference type="Rhea" id="RHEA:22585"/>
    </physiologicalReaction>
</comment>
<comment type="cofactor">
    <cofactor evidence="2">
        <name>heme b</name>
        <dbReference type="ChEBI" id="CHEBI:60344"/>
    </cofactor>
    <text evidence="2">Binds 1 heme b (iron(II)-protoporphyrin IX) group non-covalently per subunit.</text>
</comment>
<comment type="subunit">
    <text evidence="2 3 5">Homodimer. Part of a ferrous iron transporter composed of EfeU, EfeO and EfeB. However, this EfeUOB tripartite iron transporter is defective in E.coli strain K12 due to a frameshift mutation in EfeU.</text>
</comment>
<comment type="subcellular location">
    <subcellularLocation>
        <location evidence="2">Periplasm</location>
    </subcellularLocation>
</comment>
<comment type="induction">
    <text evidence="1 3">Repressed by Fur in the presence of iron. Repressed at high pH by the two-component regulatory system CpxA/CpxR.</text>
</comment>
<comment type="PTM">
    <text>Exported by the Tat system. The position of the signal peptide cleavage has been experimentally proven. Can also be exported by the Sec system.</text>
</comment>
<comment type="mass spectrometry" mass="43814.0" method="Electrospray" evidence="2"/>
<comment type="similarity">
    <text evidence="6">Belongs to the DyP-type peroxidase family. EfeB subfamily.</text>
</comment>
<accession>P31545</accession>
<accession>P75903</accession>
<feature type="signal peptide" description="Tat-type signal">
    <location>
        <begin position="1"/>
        <end position="35"/>
    </location>
</feature>
<feature type="chain" id="PRO_0000013817" description="Deferrochelatase">
    <location>
        <begin position="36"/>
        <end position="423"/>
    </location>
</feature>
<feature type="binding site" evidence="5 11">
    <location>
        <begin position="236"/>
        <end position="238"/>
    </location>
    <ligand>
        <name>heme b</name>
        <dbReference type="ChEBI" id="CHEBI:60344"/>
    </ligand>
</feature>
<feature type="binding site" evidence="5 10">
    <location>
        <begin position="236"/>
        <end position="238"/>
    </location>
    <ligand>
        <name>protoporphyrin IX</name>
        <dbReference type="ChEBI" id="CHEBI:57306"/>
    </ligand>
</feature>
<feature type="binding site" evidence="5 10">
    <location>
        <position position="296"/>
    </location>
    <ligand>
        <name>protoporphyrin IX</name>
        <dbReference type="ChEBI" id="CHEBI:57306"/>
    </ligand>
</feature>
<feature type="binding site" description="proximal binding residue" evidence="5 11">
    <location>
        <position position="329"/>
    </location>
    <ligand>
        <name>heme b</name>
        <dbReference type="ChEBI" id="CHEBI:60344"/>
    </ligand>
    <ligandPart>
        <name>Fe</name>
        <dbReference type="ChEBI" id="CHEBI:18248"/>
    </ligandPart>
</feature>
<feature type="binding site" evidence="5 11">
    <location>
        <begin position="334"/>
        <end position="336"/>
    </location>
    <ligand>
        <name>heme b</name>
        <dbReference type="ChEBI" id="CHEBI:60344"/>
    </ligand>
</feature>
<feature type="binding site" evidence="5 11">
    <location>
        <position position="347"/>
    </location>
    <ligand>
        <name>heme b</name>
        <dbReference type="ChEBI" id="CHEBI:60344"/>
    </ligand>
</feature>
<feature type="helix" evidence="12">
    <location>
        <begin position="49"/>
        <end position="51"/>
    </location>
</feature>
<feature type="strand" evidence="12">
    <location>
        <begin position="58"/>
        <end position="60"/>
    </location>
</feature>
<feature type="strand" evidence="12">
    <location>
        <begin position="62"/>
        <end position="66"/>
    </location>
</feature>
<feature type="strand" evidence="12">
    <location>
        <begin position="70"/>
        <end position="79"/>
    </location>
</feature>
<feature type="helix" evidence="12">
    <location>
        <begin position="84"/>
        <end position="103"/>
    </location>
</feature>
<feature type="strand" evidence="12">
    <location>
        <begin position="125"/>
        <end position="127"/>
    </location>
</feature>
<feature type="strand" evidence="12">
    <location>
        <begin position="133"/>
        <end position="139"/>
    </location>
</feature>
<feature type="helix" evidence="12">
    <location>
        <begin position="140"/>
        <end position="143"/>
    </location>
</feature>
<feature type="turn" evidence="13">
    <location>
        <begin position="145"/>
        <end position="148"/>
    </location>
</feature>
<feature type="helix" evidence="12">
    <location>
        <begin position="150"/>
        <end position="152"/>
    </location>
</feature>
<feature type="helix" evidence="12">
    <location>
        <begin position="170"/>
        <end position="172"/>
    </location>
</feature>
<feature type="strand" evidence="12">
    <location>
        <begin position="176"/>
        <end position="185"/>
    </location>
</feature>
<feature type="helix" evidence="12">
    <location>
        <begin position="186"/>
        <end position="199"/>
    </location>
</feature>
<feature type="turn" evidence="12">
    <location>
        <begin position="201"/>
        <end position="203"/>
    </location>
</feature>
<feature type="strand" evidence="12">
    <location>
        <begin position="204"/>
        <end position="213"/>
    </location>
</feature>
<feature type="helix" evidence="12">
    <location>
        <begin position="216"/>
        <end position="220"/>
    </location>
</feature>
<feature type="turn" evidence="12">
    <location>
        <begin position="221"/>
        <end position="223"/>
    </location>
</feature>
<feature type="strand" evidence="12">
    <location>
        <begin position="232"/>
        <end position="236"/>
    </location>
</feature>
<feature type="helix" evidence="12">
    <location>
        <begin position="245"/>
        <end position="251"/>
    </location>
</feature>
<feature type="helix" evidence="12">
    <location>
        <begin position="262"/>
        <end position="264"/>
    </location>
</feature>
<feature type="strand" evidence="12">
    <location>
        <begin position="268"/>
        <end position="277"/>
    </location>
</feature>
<feature type="helix" evidence="12">
    <location>
        <begin position="279"/>
        <end position="283"/>
    </location>
</feature>
<feature type="helix" evidence="12">
    <location>
        <begin position="287"/>
        <end position="294"/>
    </location>
</feature>
<feature type="turn" evidence="12">
    <location>
        <begin position="298"/>
        <end position="300"/>
    </location>
</feature>
<feature type="helix" evidence="12">
    <location>
        <begin position="315"/>
        <end position="317"/>
    </location>
</feature>
<feature type="strand" evidence="12">
    <location>
        <begin position="322"/>
        <end position="324"/>
    </location>
</feature>
<feature type="helix" evidence="12">
    <location>
        <begin position="329"/>
        <end position="333"/>
    </location>
</feature>
<feature type="helix" evidence="14">
    <location>
        <begin position="340"/>
        <end position="343"/>
    </location>
</feature>
<feature type="strand" evidence="12">
    <location>
        <begin position="350"/>
        <end position="356"/>
    </location>
</feature>
<feature type="strand" evidence="12">
    <location>
        <begin position="362"/>
        <end position="373"/>
    </location>
</feature>
<feature type="turn" evidence="12">
    <location>
        <begin position="375"/>
        <end position="378"/>
    </location>
</feature>
<feature type="helix" evidence="12">
    <location>
        <begin position="379"/>
        <end position="386"/>
    </location>
</feature>
<feature type="helix" evidence="12">
    <location>
        <begin position="390"/>
        <end position="393"/>
    </location>
</feature>
<feature type="strand" evidence="12">
    <location>
        <begin position="395"/>
        <end position="405"/>
    </location>
</feature>
<feature type="helix" evidence="12">
    <location>
        <begin position="418"/>
        <end position="422"/>
    </location>
</feature>
<evidence type="ECO:0000269" key="1">
    <source>
    </source>
</evidence>
<evidence type="ECO:0000269" key="2">
    <source>
    </source>
</evidence>
<evidence type="ECO:0000269" key="3">
    <source>
    </source>
</evidence>
<evidence type="ECO:0000269" key="4">
    <source>
    </source>
</evidence>
<evidence type="ECO:0000269" key="5">
    <source ref="11"/>
</evidence>
<evidence type="ECO:0000305" key="6"/>
<evidence type="ECO:0000305" key="7">
    <source>
    </source>
</evidence>
<evidence type="ECO:0000305" key="8">
    <source>
    </source>
</evidence>
<evidence type="ECO:0007744" key="9">
    <source>
        <dbReference type="PDB" id="2Y4D"/>
    </source>
</evidence>
<evidence type="ECO:0007744" key="10">
    <source>
        <dbReference type="PDB" id="2Y4E"/>
    </source>
</evidence>
<evidence type="ECO:0007744" key="11">
    <source>
        <dbReference type="PDB" id="2Y4F"/>
    </source>
</evidence>
<evidence type="ECO:0007829" key="12">
    <source>
        <dbReference type="PDB" id="2Y4D"/>
    </source>
</evidence>
<evidence type="ECO:0007829" key="13">
    <source>
        <dbReference type="PDB" id="2Y4E"/>
    </source>
</evidence>
<evidence type="ECO:0007829" key="14">
    <source>
        <dbReference type="PDB" id="2Y4F"/>
    </source>
</evidence>
<sequence length="423" mass="46754">MQYKDENGVNEPSRRRLLKVIGALALAGSCPVAHAQKTQSAPGTLSPDARNEKQPFYGEHQAGILTPQQAAMMLVAFDVLASDKADLERLFRLLTQRFAFLTQGGAAPETPNPRLPPLDSGILGGYIAPDNLTITLSVGHSLFDERFGLAPQMPKKLQKMTRFPNDSLDAALCHGDVLLQICANTQDTVIHALRDIIKHTPDLLSVRWKREGFISDHAARSKGKETPINLLGFKDGTANPDSQNDKLMQKVVWVTADQQEPAWTIGGSYQAVRLIQFRVEFWDRTPLKEQQTIFGRDKQTGAPLGMQHEHDVPDYASDPEGKVIALDSHIRLANPRTAESESSLMLRRGYSYSLGVTNSGQLDMGLLFVCYQHDLEKGFLTVQKRLNGEALEEYVKPIGGGYFFALPGVKDANDYFGSALLRV</sequence>
<gene>
    <name type="primary">efeB</name>
    <name type="synonym">ycdB</name>
    <name type="ordered locus">b1019</name>
    <name type="ordered locus">JW1004</name>
</gene>
<name>EFEB_ECOLI</name>